<gene>
    <name evidence="1" type="primary">atpH</name>
</gene>
<keyword id="KW-0066">ATP synthesis</keyword>
<keyword id="KW-0138">CF(0)</keyword>
<keyword id="KW-0150">Chloroplast</keyword>
<keyword id="KW-0375">Hydrogen ion transport</keyword>
<keyword id="KW-0406">Ion transport</keyword>
<keyword id="KW-0446">Lipid-binding</keyword>
<keyword id="KW-0472">Membrane</keyword>
<keyword id="KW-0934">Plastid</keyword>
<keyword id="KW-0793">Thylakoid</keyword>
<keyword id="KW-0812">Transmembrane</keyword>
<keyword id="KW-1133">Transmembrane helix</keyword>
<keyword id="KW-0813">Transport</keyword>
<feature type="chain" id="PRO_0000362940" description="ATP synthase subunit c, chloroplastic">
    <location>
        <begin position="1"/>
        <end position="81"/>
    </location>
</feature>
<feature type="transmembrane region" description="Helical" evidence="1">
    <location>
        <begin position="3"/>
        <end position="23"/>
    </location>
</feature>
<feature type="transmembrane region" description="Helical" evidence="1">
    <location>
        <begin position="57"/>
        <end position="77"/>
    </location>
</feature>
<feature type="site" description="Reversibly protonated during proton transport" evidence="1">
    <location>
        <position position="61"/>
    </location>
</feature>
<geneLocation type="chloroplast"/>
<evidence type="ECO:0000255" key="1">
    <source>
        <dbReference type="HAMAP-Rule" id="MF_01396"/>
    </source>
</evidence>
<accession>Q4FGF0</accession>
<name>ATPH_NUPAD</name>
<reference key="1">
    <citation type="journal article" date="2005" name="Mol. Biol. Evol.">
        <title>Identifying the basal angiosperm node in chloroplast genome phylogenies: sampling one's way out of the Felsenstein zone.</title>
        <authorList>
            <person name="Leebens-Mack J."/>
            <person name="Raubeson L.A."/>
            <person name="Cui L."/>
            <person name="Kuehl J.V."/>
            <person name="Fourcade M.H."/>
            <person name="Chumley T.W."/>
            <person name="Boore J.L."/>
            <person name="Jansen R.K."/>
            <person name="dePamphilis C.W."/>
        </authorList>
    </citation>
    <scope>NUCLEOTIDE SEQUENCE [GENOMIC DNA]</scope>
</reference>
<reference key="2">
    <citation type="journal article" date="2007" name="BMC Genomics">
        <title>Comparative chloroplast genomics: analyses including new sequences from the angiosperms Nuphar advena and Ranunculus macranthus.</title>
        <authorList>
            <person name="Raubeson L.A."/>
            <person name="Peery R."/>
            <person name="Chumley T.W."/>
            <person name="Dziubek C."/>
            <person name="Fourcade H.M."/>
            <person name="Boore J.L."/>
            <person name="Jansen R.K."/>
        </authorList>
    </citation>
    <scope>NUCLEOTIDE SEQUENCE [LARGE SCALE GENOMIC DNA]</scope>
</reference>
<organism>
    <name type="scientific">Nuphar advena</name>
    <name type="common">Common spatterdock</name>
    <name type="synonym">Nuphar lutea subsp. advena</name>
    <dbReference type="NCBI Taxonomy" id="77108"/>
    <lineage>
        <taxon>Eukaryota</taxon>
        <taxon>Viridiplantae</taxon>
        <taxon>Streptophyta</taxon>
        <taxon>Embryophyta</taxon>
        <taxon>Tracheophyta</taxon>
        <taxon>Spermatophyta</taxon>
        <taxon>Magnoliopsida</taxon>
        <taxon>Nymphaeales</taxon>
        <taxon>Nymphaeaceae</taxon>
        <taxon>Nuphar</taxon>
    </lineage>
</organism>
<comment type="function">
    <text evidence="1">F(1)F(0) ATP synthase produces ATP from ADP in the presence of a proton or sodium gradient. F-type ATPases consist of two structural domains, F(1) containing the extramembraneous catalytic core and F(0) containing the membrane proton channel, linked together by a central stalk and a peripheral stalk. During catalysis, ATP synthesis in the catalytic domain of F(1) is coupled via a rotary mechanism of the central stalk subunits to proton translocation.</text>
</comment>
<comment type="function">
    <text evidence="1">Key component of the F(0) channel; it plays a direct role in translocation across the membrane. A homomeric c-ring of between 10-14 subunits forms the central stalk rotor element with the F(1) delta and epsilon subunits.</text>
</comment>
<comment type="subunit">
    <text evidence="1">F-type ATPases have 2 components, F(1) - the catalytic core - and F(0) - the membrane proton channel. F(1) has five subunits: alpha(3), beta(3), gamma(1), delta(1), epsilon(1). F(0) has four main subunits: a(1), b(1), b'(1) and c(10-14). The alpha and beta chains form an alternating ring which encloses part of the gamma chain. F(1) is attached to F(0) by a central stalk formed by the gamma and epsilon chains, while a peripheral stalk is formed by the delta, b and b' chains.</text>
</comment>
<comment type="subcellular location">
    <subcellularLocation>
        <location evidence="1">Plastid</location>
        <location evidence="1">Chloroplast thylakoid membrane</location>
        <topology evidence="1">Multi-pass membrane protein</topology>
    </subcellularLocation>
</comment>
<comment type="miscellaneous">
    <text>In plastids the F-type ATPase is also known as CF(1)CF(0).</text>
</comment>
<comment type="similarity">
    <text evidence="1">Belongs to the ATPase C chain family.</text>
</comment>
<dbReference type="EMBL" id="DQ069381">
    <property type="protein sequence ID" value="AAZ03825.1"/>
    <property type="molecule type" value="Genomic_DNA"/>
</dbReference>
<dbReference type="EMBL" id="DQ354691">
    <property type="protein sequence ID" value="ABC60445.1"/>
    <property type="molecule type" value="Genomic_DNA"/>
</dbReference>
<dbReference type="RefSeq" id="YP_001001521.1">
    <property type="nucleotide sequence ID" value="NC_008788.1"/>
</dbReference>
<dbReference type="SMR" id="Q4FGF0"/>
<dbReference type="GeneID" id="4699618"/>
<dbReference type="GO" id="GO:0009535">
    <property type="term" value="C:chloroplast thylakoid membrane"/>
    <property type="evidence" value="ECO:0007669"/>
    <property type="project" value="UniProtKB-SubCell"/>
</dbReference>
<dbReference type="GO" id="GO:0045259">
    <property type="term" value="C:proton-transporting ATP synthase complex"/>
    <property type="evidence" value="ECO:0007669"/>
    <property type="project" value="UniProtKB-KW"/>
</dbReference>
<dbReference type="GO" id="GO:0033177">
    <property type="term" value="C:proton-transporting two-sector ATPase complex, proton-transporting domain"/>
    <property type="evidence" value="ECO:0007669"/>
    <property type="project" value="InterPro"/>
</dbReference>
<dbReference type="GO" id="GO:0008289">
    <property type="term" value="F:lipid binding"/>
    <property type="evidence" value="ECO:0007669"/>
    <property type="project" value="UniProtKB-KW"/>
</dbReference>
<dbReference type="GO" id="GO:0046933">
    <property type="term" value="F:proton-transporting ATP synthase activity, rotational mechanism"/>
    <property type="evidence" value="ECO:0007669"/>
    <property type="project" value="UniProtKB-UniRule"/>
</dbReference>
<dbReference type="CDD" id="cd18183">
    <property type="entry name" value="ATP-synt_Fo_c_ATPH"/>
    <property type="match status" value="1"/>
</dbReference>
<dbReference type="FunFam" id="1.20.20.10:FF:000001">
    <property type="entry name" value="ATP synthase subunit c, chloroplastic"/>
    <property type="match status" value="1"/>
</dbReference>
<dbReference type="Gene3D" id="1.20.20.10">
    <property type="entry name" value="F1F0 ATP synthase subunit C"/>
    <property type="match status" value="1"/>
</dbReference>
<dbReference type="HAMAP" id="MF_01396">
    <property type="entry name" value="ATP_synth_c_bact"/>
    <property type="match status" value="1"/>
</dbReference>
<dbReference type="InterPro" id="IPR005953">
    <property type="entry name" value="ATP_synth_csu_bac/chlpt"/>
</dbReference>
<dbReference type="InterPro" id="IPR000454">
    <property type="entry name" value="ATP_synth_F0_csu"/>
</dbReference>
<dbReference type="InterPro" id="IPR020537">
    <property type="entry name" value="ATP_synth_F0_csu_DDCD_BS"/>
</dbReference>
<dbReference type="InterPro" id="IPR038662">
    <property type="entry name" value="ATP_synth_F0_csu_sf"/>
</dbReference>
<dbReference type="InterPro" id="IPR002379">
    <property type="entry name" value="ATPase_proteolipid_c-like_dom"/>
</dbReference>
<dbReference type="InterPro" id="IPR035921">
    <property type="entry name" value="F/V-ATP_Csub_sf"/>
</dbReference>
<dbReference type="NCBIfam" id="TIGR01260">
    <property type="entry name" value="ATP_synt_c"/>
    <property type="match status" value="1"/>
</dbReference>
<dbReference type="NCBIfam" id="NF005608">
    <property type="entry name" value="PRK07354.1"/>
    <property type="match status" value="1"/>
</dbReference>
<dbReference type="PANTHER" id="PTHR10031">
    <property type="entry name" value="ATP SYNTHASE LIPID-BINDING PROTEIN, MITOCHONDRIAL"/>
    <property type="match status" value="1"/>
</dbReference>
<dbReference type="PANTHER" id="PTHR10031:SF0">
    <property type="entry name" value="ATPASE PROTEIN 9"/>
    <property type="match status" value="1"/>
</dbReference>
<dbReference type="Pfam" id="PF00137">
    <property type="entry name" value="ATP-synt_C"/>
    <property type="match status" value="1"/>
</dbReference>
<dbReference type="PRINTS" id="PR00124">
    <property type="entry name" value="ATPASEC"/>
</dbReference>
<dbReference type="SUPFAM" id="SSF81333">
    <property type="entry name" value="F1F0 ATP synthase subunit C"/>
    <property type="match status" value="1"/>
</dbReference>
<dbReference type="PROSITE" id="PS00605">
    <property type="entry name" value="ATPASE_C"/>
    <property type="match status" value="1"/>
</dbReference>
<sequence length="81" mass="7990">MNPLISAASVIAAGLAVGLASIGPGVGQGTAAGQAVEGIARQPEAEGKIRGTLLLSLAFMEALTIYGLVVALALLFANPFV</sequence>
<protein>
    <recommendedName>
        <fullName evidence="1">ATP synthase subunit c, chloroplastic</fullName>
    </recommendedName>
    <alternativeName>
        <fullName evidence="1">ATP synthase F(0) sector subunit c</fullName>
    </alternativeName>
    <alternativeName>
        <fullName evidence="1">ATPase subunit III</fullName>
    </alternativeName>
    <alternativeName>
        <fullName evidence="1">F-type ATPase subunit c</fullName>
        <shortName evidence="1">F-ATPase subunit c</shortName>
    </alternativeName>
    <alternativeName>
        <fullName evidence="1">Lipid-binding protein</fullName>
    </alternativeName>
</protein>
<proteinExistence type="inferred from homology"/>